<proteinExistence type="inferred from homology"/>
<name>LIPB_SHEB5</name>
<reference key="1">
    <citation type="submission" date="2007-02" db="EMBL/GenBank/DDBJ databases">
        <title>Complete sequence of chromosome of Shewanella baltica OS155.</title>
        <authorList>
            <consortium name="US DOE Joint Genome Institute"/>
            <person name="Copeland A."/>
            <person name="Lucas S."/>
            <person name="Lapidus A."/>
            <person name="Barry K."/>
            <person name="Detter J.C."/>
            <person name="Glavina del Rio T."/>
            <person name="Hammon N."/>
            <person name="Israni S."/>
            <person name="Dalin E."/>
            <person name="Tice H."/>
            <person name="Pitluck S."/>
            <person name="Sims D.R."/>
            <person name="Brettin T."/>
            <person name="Bruce D."/>
            <person name="Han C."/>
            <person name="Tapia R."/>
            <person name="Brainard J."/>
            <person name="Schmutz J."/>
            <person name="Larimer F."/>
            <person name="Land M."/>
            <person name="Hauser L."/>
            <person name="Kyrpides N."/>
            <person name="Mikhailova N."/>
            <person name="Brettar I."/>
            <person name="Klappenbach J."/>
            <person name="Konstantinidis K."/>
            <person name="Rodrigues J."/>
            <person name="Tiedje J."/>
            <person name="Richardson P."/>
        </authorList>
    </citation>
    <scope>NUCLEOTIDE SEQUENCE [LARGE SCALE GENOMIC DNA]</scope>
    <source>
        <strain>OS155 / ATCC BAA-1091</strain>
    </source>
</reference>
<keyword id="KW-0012">Acyltransferase</keyword>
<keyword id="KW-0963">Cytoplasm</keyword>
<keyword id="KW-1185">Reference proteome</keyword>
<keyword id="KW-0808">Transferase</keyword>
<gene>
    <name evidence="1" type="primary">lipB</name>
    <name type="ordered locus">Sbal_3281</name>
</gene>
<dbReference type="EC" id="2.3.1.181" evidence="1"/>
<dbReference type="EMBL" id="CP000563">
    <property type="protein sequence ID" value="ABN62761.1"/>
    <property type="molecule type" value="Genomic_DNA"/>
</dbReference>
<dbReference type="RefSeq" id="WP_006082759.1">
    <property type="nucleotide sequence ID" value="NC_009052.1"/>
</dbReference>
<dbReference type="SMR" id="A3D7P8"/>
<dbReference type="STRING" id="325240.Sbal_3281"/>
<dbReference type="GeneID" id="11773505"/>
<dbReference type="KEGG" id="sbl:Sbal_3281"/>
<dbReference type="HOGENOM" id="CLU_035168_3_1_6"/>
<dbReference type="OrthoDB" id="9787061at2"/>
<dbReference type="UniPathway" id="UPA00538">
    <property type="reaction ID" value="UER00592"/>
</dbReference>
<dbReference type="Proteomes" id="UP000001557">
    <property type="component" value="Chromosome"/>
</dbReference>
<dbReference type="GO" id="GO:0005737">
    <property type="term" value="C:cytoplasm"/>
    <property type="evidence" value="ECO:0007669"/>
    <property type="project" value="UniProtKB-SubCell"/>
</dbReference>
<dbReference type="GO" id="GO:0033819">
    <property type="term" value="F:lipoyl(octanoyl) transferase activity"/>
    <property type="evidence" value="ECO:0007669"/>
    <property type="project" value="UniProtKB-EC"/>
</dbReference>
<dbReference type="GO" id="GO:0036211">
    <property type="term" value="P:protein modification process"/>
    <property type="evidence" value="ECO:0007669"/>
    <property type="project" value="InterPro"/>
</dbReference>
<dbReference type="CDD" id="cd16444">
    <property type="entry name" value="LipB"/>
    <property type="match status" value="1"/>
</dbReference>
<dbReference type="FunFam" id="3.30.930.10:FF:000020">
    <property type="entry name" value="Octanoyltransferase"/>
    <property type="match status" value="1"/>
</dbReference>
<dbReference type="Gene3D" id="3.30.930.10">
    <property type="entry name" value="Bira Bifunctional Protein, Domain 2"/>
    <property type="match status" value="1"/>
</dbReference>
<dbReference type="HAMAP" id="MF_00013">
    <property type="entry name" value="LipB"/>
    <property type="match status" value="1"/>
</dbReference>
<dbReference type="InterPro" id="IPR045864">
    <property type="entry name" value="aa-tRNA-synth_II/BPL/LPL"/>
</dbReference>
<dbReference type="InterPro" id="IPR004143">
    <property type="entry name" value="BPL_LPL_catalytic"/>
</dbReference>
<dbReference type="InterPro" id="IPR000544">
    <property type="entry name" value="Octanoyltransferase"/>
</dbReference>
<dbReference type="InterPro" id="IPR020605">
    <property type="entry name" value="Octanoyltransferase_CS"/>
</dbReference>
<dbReference type="NCBIfam" id="TIGR00214">
    <property type="entry name" value="lipB"/>
    <property type="match status" value="1"/>
</dbReference>
<dbReference type="NCBIfam" id="NF010922">
    <property type="entry name" value="PRK14342.1"/>
    <property type="match status" value="1"/>
</dbReference>
<dbReference type="PANTHER" id="PTHR10993:SF7">
    <property type="entry name" value="LIPOYLTRANSFERASE 2, MITOCHONDRIAL-RELATED"/>
    <property type="match status" value="1"/>
</dbReference>
<dbReference type="PANTHER" id="PTHR10993">
    <property type="entry name" value="OCTANOYLTRANSFERASE"/>
    <property type="match status" value="1"/>
</dbReference>
<dbReference type="Pfam" id="PF21948">
    <property type="entry name" value="LplA-B_cat"/>
    <property type="match status" value="1"/>
</dbReference>
<dbReference type="PIRSF" id="PIRSF016262">
    <property type="entry name" value="LPLase"/>
    <property type="match status" value="1"/>
</dbReference>
<dbReference type="SUPFAM" id="SSF55681">
    <property type="entry name" value="Class II aaRS and biotin synthetases"/>
    <property type="match status" value="1"/>
</dbReference>
<dbReference type="PROSITE" id="PS51733">
    <property type="entry name" value="BPL_LPL_CATALYTIC"/>
    <property type="match status" value="1"/>
</dbReference>
<dbReference type="PROSITE" id="PS01313">
    <property type="entry name" value="LIPB"/>
    <property type="match status" value="1"/>
</dbReference>
<comment type="function">
    <text evidence="1">Catalyzes the transfer of endogenously produced octanoic acid from octanoyl-acyl-carrier-protein onto the lipoyl domains of lipoate-dependent enzymes. Lipoyl-ACP can also act as a substrate although octanoyl-ACP is likely to be the physiological substrate.</text>
</comment>
<comment type="catalytic activity">
    <reaction evidence="1">
        <text>octanoyl-[ACP] + L-lysyl-[protein] = N(6)-octanoyl-L-lysyl-[protein] + holo-[ACP] + H(+)</text>
        <dbReference type="Rhea" id="RHEA:17665"/>
        <dbReference type="Rhea" id="RHEA-COMP:9636"/>
        <dbReference type="Rhea" id="RHEA-COMP:9685"/>
        <dbReference type="Rhea" id="RHEA-COMP:9752"/>
        <dbReference type="Rhea" id="RHEA-COMP:9928"/>
        <dbReference type="ChEBI" id="CHEBI:15378"/>
        <dbReference type="ChEBI" id="CHEBI:29969"/>
        <dbReference type="ChEBI" id="CHEBI:64479"/>
        <dbReference type="ChEBI" id="CHEBI:78463"/>
        <dbReference type="ChEBI" id="CHEBI:78809"/>
        <dbReference type="EC" id="2.3.1.181"/>
    </reaction>
</comment>
<comment type="pathway">
    <text evidence="1">Protein modification; protein lipoylation via endogenous pathway; protein N(6)-(lipoyl)lysine from octanoyl-[acyl-carrier-protein]: step 1/2.</text>
</comment>
<comment type="subcellular location">
    <subcellularLocation>
        <location evidence="1">Cytoplasm</location>
    </subcellularLocation>
</comment>
<comment type="miscellaneous">
    <text evidence="1">In the reaction, the free carboxyl group of octanoic acid is attached via an amide linkage to the epsilon-amino group of a specific lysine residue of lipoyl domains of lipoate-dependent enzymes.</text>
</comment>
<comment type="similarity">
    <text evidence="1">Belongs to the LipB family.</text>
</comment>
<organism>
    <name type="scientific">Shewanella baltica (strain OS155 / ATCC BAA-1091)</name>
    <dbReference type="NCBI Taxonomy" id="325240"/>
    <lineage>
        <taxon>Bacteria</taxon>
        <taxon>Pseudomonadati</taxon>
        <taxon>Pseudomonadota</taxon>
        <taxon>Gammaproteobacteria</taxon>
        <taxon>Alteromonadales</taxon>
        <taxon>Shewanellaceae</taxon>
        <taxon>Shewanella</taxon>
    </lineage>
</organism>
<sequence length="217" mass="24099">MQDTTLHIRHLGKQDYESVWHAMQHYTDTRDSESHDELWIVEHPPVFTQGQAGKSEHILNAGDIPVIQVDRGGQVTYHGPGQLVVYPLLDIKRSKVGVRQLVTHIEQSIVDMLAKYDINAYAKADAPGVYVDERKIASLGLRIRKGCSFHGLALNVDMDLAPFRRINPCGYAGLEMVQCKALGGPQTVIEAGEQLTITFSQLLGYQHLVHHQGLAAS</sequence>
<feature type="chain" id="PRO_1000001129" description="Octanoyltransferase">
    <location>
        <begin position="1"/>
        <end position="217"/>
    </location>
</feature>
<feature type="domain" description="BPL/LPL catalytic" evidence="2">
    <location>
        <begin position="32"/>
        <end position="207"/>
    </location>
</feature>
<feature type="active site" description="Acyl-thioester intermediate" evidence="1">
    <location>
        <position position="169"/>
    </location>
</feature>
<feature type="binding site" evidence="1">
    <location>
        <begin position="71"/>
        <end position="78"/>
    </location>
    <ligand>
        <name>substrate</name>
    </ligand>
</feature>
<feature type="binding site" evidence="1">
    <location>
        <begin position="138"/>
        <end position="140"/>
    </location>
    <ligand>
        <name>substrate</name>
    </ligand>
</feature>
<feature type="binding site" evidence="1">
    <location>
        <begin position="151"/>
        <end position="153"/>
    </location>
    <ligand>
        <name>substrate</name>
    </ligand>
</feature>
<feature type="site" description="Lowers pKa of active site Cys" evidence="1">
    <location>
        <position position="135"/>
    </location>
</feature>
<protein>
    <recommendedName>
        <fullName evidence="1">Octanoyltransferase</fullName>
        <ecNumber evidence="1">2.3.1.181</ecNumber>
    </recommendedName>
    <alternativeName>
        <fullName evidence="1">Lipoate-protein ligase B</fullName>
    </alternativeName>
    <alternativeName>
        <fullName evidence="1">Lipoyl/octanoyl transferase</fullName>
    </alternativeName>
    <alternativeName>
        <fullName evidence="1">Octanoyl-[acyl-carrier-protein]-protein N-octanoyltransferase</fullName>
    </alternativeName>
</protein>
<accession>A3D7P8</accession>
<evidence type="ECO:0000255" key="1">
    <source>
        <dbReference type="HAMAP-Rule" id="MF_00013"/>
    </source>
</evidence>
<evidence type="ECO:0000255" key="2">
    <source>
        <dbReference type="PROSITE-ProRule" id="PRU01067"/>
    </source>
</evidence>